<proteinExistence type="inferred from homology"/>
<gene>
    <name evidence="1" type="primary">rplQ</name>
    <name type="ordered locus">MGAS10270_Spy0074</name>
</gene>
<accession>Q1JJ34</accession>
<sequence length="128" mass="14522">MAYRKLGRTSSQRKAMLRDLTTDLLINESIVTTEARAKEIRKTVEKMITLGKRGDLHARRQAAAYVRNEIASENYDEATDKYTSTTALQKLFSEIAPRYAERNGGYTRILKTEPRRGDAAPMAIIELV</sequence>
<evidence type="ECO:0000255" key="1">
    <source>
        <dbReference type="HAMAP-Rule" id="MF_01368"/>
    </source>
</evidence>
<evidence type="ECO:0000305" key="2"/>
<keyword id="KW-0687">Ribonucleoprotein</keyword>
<keyword id="KW-0689">Ribosomal protein</keyword>
<protein>
    <recommendedName>
        <fullName evidence="1">Large ribosomal subunit protein bL17</fullName>
    </recommendedName>
    <alternativeName>
        <fullName evidence="2">50S ribosomal protein L17</fullName>
    </alternativeName>
</protein>
<comment type="subunit">
    <text evidence="1">Part of the 50S ribosomal subunit. Contacts protein L32.</text>
</comment>
<comment type="similarity">
    <text evidence="1">Belongs to the bacterial ribosomal protein bL17 family.</text>
</comment>
<reference key="1">
    <citation type="journal article" date="2006" name="Proc. Natl. Acad. Sci. U.S.A.">
        <title>Molecular genetic anatomy of inter- and intraserotype variation in the human bacterial pathogen group A Streptococcus.</title>
        <authorList>
            <person name="Beres S.B."/>
            <person name="Richter E.W."/>
            <person name="Nagiec M.J."/>
            <person name="Sumby P."/>
            <person name="Porcella S.F."/>
            <person name="DeLeo F.R."/>
            <person name="Musser J.M."/>
        </authorList>
    </citation>
    <scope>NUCLEOTIDE SEQUENCE [LARGE SCALE GENOMIC DNA]</scope>
    <source>
        <strain>MGAS10270</strain>
    </source>
</reference>
<name>RL17_STRPD</name>
<dbReference type="EMBL" id="CP000260">
    <property type="protein sequence ID" value="ABF33139.1"/>
    <property type="molecule type" value="Genomic_DNA"/>
</dbReference>
<dbReference type="RefSeq" id="WP_002986602.1">
    <property type="nucleotide sequence ID" value="NZ_CVUH01000001.1"/>
</dbReference>
<dbReference type="SMR" id="Q1JJ34"/>
<dbReference type="GeneID" id="83703931"/>
<dbReference type="KEGG" id="sph:MGAS10270_Spy0074"/>
<dbReference type="HOGENOM" id="CLU_074407_2_2_9"/>
<dbReference type="Proteomes" id="UP000002436">
    <property type="component" value="Chromosome"/>
</dbReference>
<dbReference type="GO" id="GO:0022625">
    <property type="term" value="C:cytosolic large ribosomal subunit"/>
    <property type="evidence" value="ECO:0007669"/>
    <property type="project" value="TreeGrafter"/>
</dbReference>
<dbReference type="GO" id="GO:0003735">
    <property type="term" value="F:structural constituent of ribosome"/>
    <property type="evidence" value="ECO:0007669"/>
    <property type="project" value="InterPro"/>
</dbReference>
<dbReference type="GO" id="GO:0006412">
    <property type="term" value="P:translation"/>
    <property type="evidence" value="ECO:0007669"/>
    <property type="project" value="UniProtKB-UniRule"/>
</dbReference>
<dbReference type="FunFam" id="3.90.1030.10:FF:000002">
    <property type="entry name" value="50S ribosomal protein L17"/>
    <property type="match status" value="1"/>
</dbReference>
<dbReference type="Gene3D" id="3.90.1030.10">
    <property type="entry name" value="Ribosomal protein L17"/>
    <property type="match status" value="1"/>
</dbReference>
<dbReference type="HAMAP" id="MF_01368">
    <property type="entry name" value="Ribosomal_bL17"/>
    <property type="match status" value="1"/>
</dbReference>
<dbReference type="InterPro" id="IPR000456">
    <property type="entry name" value="Ribosomal_bL17"/>
</dbReference>
<dbReference type="InterPro" id="IPR047859">
    <property type="entry name" value="Ribosomal_bL17_CS"/>
</dbReference>
<dbReference type="InterPro" id="IPR036373">
    <property type="entry name" value="Ribosomal_bL17_sf"/>
</dbReference>
<dbReference type="NCBIfam" id="TIGR00059">
    <property type="entry name" value="L17"/>
    <property type="match status" value="1"/>
</dbReference>
<dbReference type="PANTHER" id="PTHR14413:SF16">
    <property type="entry name" value="LARGE RIBOSOMAL SUBUNIT PROTEIN BL17M"/>
    <property type="match status" value="1"/>
</dbReference>
<dbReference type="PANTHER" id="PTHR14413">
    <property type="entry name" value="RIBOSOMAL PROTEIN L17"/>
    <property type="match status" value="1"/>
</dbReference>
<dbReference type="Pfam" id="PF01196">
    <property type="entry name" value="Ribosomal_L17"/>
    <property type="match status" value="1"/>
</dbReference>
<dbReference type="SUPFAM" id="SSF64263">
    <property type="entry name" value="Prokaryotic ribosomal protein L17"/>
    <property type="match status" value="1"/>
</dbReference>
<dbReference type="PROSITE" id="PS01167">
    <property type="entry name" value="RIBOSOMAL_L17"/>
    <property type="match status" value="1"/>
</dbReference>
<feature type="chain" id="PRO_1000055963" description="Large ribosomal subunit protein bL17">
    <location>
        <begin position="1"/>
        <end position="128"/>
    </location>
</feature>
<organism>
    <name type="scientific">Streptococcus pyogenes serotype M2 (strain MGAS10270)</name>
    <dbReference type="NCBI Taxonomy" id="370552"/>
    <lineage>
        <taxon>Bacteria</taxon>
        <taxon>Bacillati</taxon>
        <taxon>Bacillota</taxon>
        <taxon>Bacilli</taxon>
        <taxon>Lactobacillales</taxon>
        <taxon>Streptococcaceae</taxon>
        <taxon>Streptococcus</taxon>
    </lineage>
</organism>